<protein>
    <recommendedName>
        <fullName evidence="1">Ferredoxin--NADP reductase</fullName>
        <shortName evidence="1">FNR</shortName>
        <shortName evidence="1">Fd-NADP(+) reductase</shortName>
        <ecNumber evidence="1">1.18.1.2</ecNumber>
    </recommendedName>
</protein>
<feature type="chain" id="PRO_0000364962" description="Ferredoxin--NADP reductase">
    <location>
        <begin position="1"/>
        <end position="330"/>
    </location>
</feature>
<feature type="binding site" evidence="1">
    <location>
        <position position="35"/>
    </location>
    <ligand>
        <name>FAD</name>
        <dbReference type="ChEBI" id="CHEBI:57692"/>
    </ligand>
</feature>
<feature type="binding site" evidence="1">
    <location>
        <position position="43"/>
    </location>
    <ligand>
        <name>FAD</name>
        <dbReference type="ChEBI" id="CHEBI:57692"/>
    </ligand>
</feature>
<feature type="binding site" evidence="1">
    <location>
        <position position="48"/>
    </location>
    <ligand>
        <name>FAD</name>
        <dbReference type="ChEBI" id="CHEBI:57692"/>
    </ligand>
</feature>
<feature type="binding site" evidence="1">
    <location>
        <position position="90"/>
    </location>
    <ligand>
        <name>FAD</name>
        <dbReference type="ChEBI" id="CHEBI:57692"/>
    </ligand>
</feature>
<feature type="binding site" evidence="1">
    <location>
        <position position="123"/>
    </location>
    <ligand>
        <name>FAD</name>
        <dbReference type="ChEBI" id="CHEBI:57692"/>
    </ligand>
</feature>
<feature type="binding site" evidence="1">
    <location>
        <position position="285"/>
    </location>
    <ligand>
        <name>FAD</name>
        <dbReference type="ChEBI" id="CHEBI:57692"/>
    </ligand>
</feature>
<feature type="binding site" evidence="1">
    <location>
        <position position="326"/>
    </location>
    <ligand>
        <name>FAD</name>
        <dbReference type="ChEBI" id="CHEBI:57692"/>
    </ligand>
</feature>
<gene>
    <name type="ordered locus">SPy_0850</name>
    <name type="ordered locus">M5005_Spy0657</name>
</gene>
<accession>Q9A0B5</accession>
<accession>Q48ZE3</accession>
<dbReference type="EC" id="1.18.1.2" evidence="1"/>
<dbReference type="EMBL" id="AE004092">
    <property type="protein sequence ID" value="AAK33778.1"/>
    <property type="molecule type" value="Genomic_DNA"/>
</dbReference>
<dbReference type="EMBL" id="CP000017">
    <property type="protein sequence ID" value="AAZ51275.1"/>
    <property type="molecule type" value="Genomic_DNA"/>
</dbReference>
<dbReference type="RefSeq" id="NP_269057.1">
    <property type="nucleotide sequence ID" value="NC_002737.2"/>
</dbReference>
<dbReference type="SMR" id="Q9A0B5"/>
<dbReference type="PaxDb" id="1314-HKU360_00670"/>
<dbReference type="KEGG" id="spy:SPy_0850"/>
<dbReference type="KEGG" id="spz:M5005_Spy0657"/>
<dbReference type="PATRIC" id="fig|160490.10.peg.727"/>
<dbReference type="HOGENOM" id="CLU_031864_5_5_9"/>
<dbReference type="OMA" id="TLMCQSA"/>
<dbReference type="Proteomes" id="UP000000750">
    <property type="component" value="Chromosome"/>
</dbReference>
<dbReference type="GO" id="GO:0004324">
    <property type="term" value="F:ferredoxin-NADP+ reductase activity"/>
    <property type="evidence" value="ECO:0007669"/>
    <property type="project" value="UniProtKB-UniRule"/>
</dbReference>
<dbReference type="GO" id="GO:0050660">
    <property type="term" value="F:flavin adenine dinucleotide binding"/>
    <property type="evidence" value="ECO:0007669"/>
    <property type="project" value="UniProtKB-UniRule"/>
</dbReference>
<dbReference type="GO" id="GO:0050661">
    <property type="term" value="F:NADP binding"/>
    <property type="evidence" value="ECO:0007669"/>
    <property type="project" value="UniProtKB-UniRule"/>
</dbReference>
<dbReference type="Gene3D" id="3.50.50.60">
    <property type="entry name" value="FAD/NAD(P)-binding domain"/>
    <property type="match status" value="2"/>
</dbReference>
<dbReference type="HAMAP" id="MF_01685">
    <property type="entry name" value="FENR2"/>
    <property type="match status" value="1"/>
</dbReference>
<dbReference type="InterPro" id="IPR036188">
    <property type="entry name" value="FAD/NAD-bd_sf"/>
</dbReference>
<dbReference type="InterPro" id="IPR023753">
    <property type="entry name" value="FAD/NAD-binding_dom"/>
</dbReference>
<dbReference type="InterPro" id="IPR022890">
    <property type="entry name" value="Fd--NADP_Rdtase_type_2"/>
</dbReference>
<dbReference type="InterPro" id="IPR050097">
    <property type="entry name" value="Ferredoxin-NADP_redctase_2"/>
</dbReference>
<dbReference type="PANTHER" id="PTHR48105">
    <property type="entry name" value="THIOREDOXIN REDUCTASE 1-RELATED-RELATED"/>
    <property type="match status" value="1"/>
</dbReference>
<dbReference type="Pfam" id="PF07992">
    <property type="entry name" value="Pyr_redox_2"/>
    <property type="match status" value="1"/>
</dbReference>
<dbReference type="PRINTS" id="PR00368">
    <property type="entry name" value="FADPNR"/>
</dbReference>
<dbReference type="PRINTS" id="PR00469">
    <property type="entry name" value="PNDRDTASEII"/>
</dbReference>
<dbReference type="SUPFAM" id="SSF51905">
    <property type="entry name" value="FAD/NAD(P)-binding domain"/>
    <property type="match status" value="1"/>
</dbReference>
<sequence>MKDKAYDITIIGGGPIGLFAAFYAGLRGVTVKIIESLSELGGQPAILYPEKMIYDIPAYPSLTGVELTENLIKQLSRFEDRTTICLKEEVLTFDKVKGGFSIRTNKAEHFSKAIIIACGNGAFAPRTLGLESEENFADHNLFYNVHQLDQFAGQKVVICGGGDSAVDWALALEDIAESVTVVHRRDAFRAHEHSVELLKASTVNLLTPYVPKALKGIGNLAEKLVIQKVKEDEVLELELDSLIVSFGFSTSNKNLKNWNLDYKRSSITVSPLFQTSQEGIFAIGDAAAYNGKVDLIATGFGEAPTAVNQAINYIYPDRDNRVVHSTSLID</sequence>
<keyword id="KW-0274">FAD</keyword>
<keyword id="KW-0285">Flavoprotein</keyword>
<keyword id="KW-0521">NADP</keyword>
<keyword id="KW-0560">Oxidoreductase</keyword>
<keyword id="KW-1185">Reference proteome</keyword>
<comment type="catalytic activity">
    <reaction evidence="1">
        <text>2 reduced [2Fe-2S]-[ferredoxin] + NADP(+) + H(+) = 2 oxidized [2Fe-2S]-[ferredoxin] + NADPH</text>
        <dbReference type="Rhea" id="RHEA:20125"/>
        <dbReference type="Rhea" id="RHEA-COMP:10000"/>
        <dbReference type="Rhea" id="RHEA-COMP:10001"/>
        <dbReference type="ChEBI" id="CHEBI:15378"/>
        <dbReference type="ChEBI" id="CHEBI:33737"/>
        <dbReference type="ChEBI" id="CHEBI:33738"/>
        <dbReference type="ChEBI" id="CHEBI:57783"/>
        <dbReference type="ChEBI" id="CHEBI:58349"/>
        <dbReference type="EC" id="1.18.1.2"/>
    </reaction>
</comment>
<comment type="cofactor">
    <cofactor evidence="1">
        <name>FAD</name>
        <dbReference type="ChEBI" id="CHEBI:57692"/>
    </cofactor>
    <text evidence="1">Binds 1 FAD per subunit.</text>
</comment>
<comment type="subunit">
    <text evidence="1">Homodimer.</text>
</comment>
<comment type="similarity">
    <text evidence="1">Belongs to the ferredoxin--NADP reductase type 2 family.</text>
</comment>
<organism>
    <name type="scientific">Streptococcus pyogenes serotype M1</name>
    <dbReference type="NCBI Taxonomy" id="301447"/>
    <lineage>
        <taxon>Bacteria</taxon>
        <taxon>Bacillati</taxon>
        <taxon>Bacillota</taxon>
        <taxon>Bacilli</taxon>
        <taxon>Lactobacillales</taxon>
        <taxon>Streptococcaceae</taxon>
        <taxon>Streptococcus</taxon>
    </lineage>
</organism>
<evidence type="ECO:0000255" key="1">
    <source>
        <dbReference type="HAMAP-Rule" id="MF_01685"/>
    </source>
</evidence>
<name>FENR_STRP1</name>
<reference key="1">
    <citation type="journal article" date="2001" name="Proc. Natl. Acad. Sci. U.S.A.">
        <title>Complete genome sequence of an M1 strain of Streptococcus pyogenes.</title>
        <authorList>
            <person name="Ferretti J.J."/>
            <person name="McShan W.M."/>
            <person name="Ajdic D.J."/>
            <person name="Savic D.J."/>
            <person name="Savic G."/>
            <person name="Lyon K."/>
            <person name="Primeaux C."/>
            <person name="Sezate S."/>
            <person name="Suvorov A.N."/>
            <person name="Kenton S."/>
            <person name="Lai H.S."/>
            <person name="Lin S.P."/>
            <person name="Qian Y."/>
            <person name="Jia H.G."/>
            <person name="Najar F.Z."/>
            <person name="Ren Q."/>
            <person name="Zhu H."/>
            <person name="Song L."/>
            <person name="White J."/>
            <person name="Yuan X."/>
            <person name="Clifton S.W."/>
            <person name="Roe B.A."/>
            <person name="McLaughlin R.E."/>
        </authorList>
    </citation>
    <scope>NUCLEOTIDE SEQUENCE [LARGE SCALE GENOMIC DNA]</scope>
    <source>
        <strain>ATCC 700294 / SF370 / Serotype M1</strain>
    </source>
</reference>
<reference key="2">
    <citation type="journal article" date="2005" name="J. Infect. Dis.">
        <title>Evolutionary origin and emergence of a highly successful clone of serotype M1 group A Streptococcus involved multiple horizontal gene transfer events.</title>
        <authorList>
            <person name="Sumby P."/>
            <person name="Porcella S.F."/>
            <person name="Madrigal A.G."/>
            <person name="Barbian K.D."/>
            <person name="Virtaneva K."/>
            <person name="Ricklefs S.M."/>
            <person name="Sturdevant D.E."/>
            <person name="Graham M.R."/>
            <person name="Vuopio-Varkila J."/>
            <person name="Hoe N.P."/>
            <person name="Musser J.M."/>
        </authorList>
    </citation>
    <scope>NUCLEOTIDE SEQUENCE [LARGE SCALE GENOMIC DNA]</scope>
    <source>
        <strain>ATCC BAA-947 / MGAS5005 / Serotype M1</strain>
    </source>
</reference>
<proteinExistence type="inferred from homology"/>